<comment type="function">
    <text>Serine/threonine-protein kinase that may function as a signaling receptor of extracellular matrix component.</text>
</comment>
<comment type="catalytic activity">
    <reaction>
        <text>L-seryl-[protein] + ATP = O-phospho-L-seryl-[protein] + ADP + H(+)</text>
        <dbReference type="Rhea" id="RHEA:17989"/>
        <dbReference type="Rhea" id="RHEA-COMP:9863"/>
        <dbReference type="Rhea" id="RHEA-COMP:11604"/>
        <dbReference type="ChEBI" id="CHEBI:15378"/>
        <dbReference type="ChEBI" id="CHEBI:29999"/>
        <dbReference type="ChEBI" id="CHEBI:30616"/>
        <dbReference type="ChEBI" id="CHEBI:83421"/>
        <dbReference type="ChEBI" id="CHEBI:456216"/>
    </reaction>
</comment>
<comment type="catalytic activity">
    <reaction>
        <text>L-threonyl-[protein] + ATP = O-phospho-L-threonyl-[protein] + ADP + H(+)</text>
        <dbReference type="Rhea" id="RHEA:46608"/>
        <dbReference type="Rhea" id="RHEA-COMP:11060"/>
        <dbReference type="Rhea" id="RHEA-COMP:11605"/>
        <dbReference type="ChEBI" id="CHEBI:15378"/>
        <dbReference type="ChEBI" id="CHEBI:30013"/>
        <dbReference type="ChEBI" id="CHEBI:30616"/>
        <dbReference type="ChEBI" id="CHEBI:61977"/>
        <dbReference type="ChEBI" id="CHEBI:456216"/>
    </reaction>
</comment>
<comment type="subcellular location">
    <subcellularLocation>
        <location evidence="8">Membrane</location>
        <topology evidence="8">Single-pass type I membrane protein</topology>
    </subcellularLocation>
</comment>
<comment type="tissue specificity">
    <text evidence="7">Preferentially expressed in roots and flowers.</text>
</comment>
<comment type="induction">
    <text evidence="7">Induced by INA.</text>
</comment>
<comment type="domain">
    <text>The EGF-like region is specific to this family of proteins and seems to consist of the C-terminal of an EGF-like domain fused to the N-terminal of another one.</text>
</comment>
<comment type="similarity">
    <text evidence="4">Belongs to the protein kinase superfamily. Ser/Thr protein kinase family.</text>
</comment>
<sequence>MKTKTSIFQFIVASVLTLLINDSSAATPPPPISNSSTSCNKTCGGISIPFPFGIGGKDCYLNGWYEVICNTTTSDSNTTVPLLSMINREVVNISLPDSNEPYGLVQIKGPVTSLGCSSNTSEGPQNSLPVLNVTGKGSPYFLTDENRLVAVGCGIKALMTDTESEILGCESSCEHRKSGEEVTNLICTGYRCCQARLPVGRPQAITVNIENSSGGEETCKVAFLTDKRYSPSNVTEPEQFHNNGYVVLELGWYFATSNSRFKSLLGCTNMSRKGSGFSDDNCSCEYDYFSGMSYRNCYCDYGYTGNPYLRGGCVDTDSCEGNHNCGEDAHCVNMPGPMSMCRPNPKITKPTKPPVLQGILIGLSGLVFFVGLFWLFKLIKKRRNINRSKKFFKRNGGLLLKQQLTTKDGNVEMSKIFSSKELRKATDNFSIDRVLGQGGQGTVYKGMLVDGSIVAVKRSKVVDEDKMEEFINEIVLLSQINHRNIVKLLGCCLETEVPILVYEYIPNGDLFKRLHDESDDYTMTWEVRLRIAIEIAGALTYMHSAASFPIFHRDIKTTNILLDEKYRAKVSDFGTSRSVTLDQTHLTTLVAGTFGYMDPEYFLSSQYTHKSDVYSFGVVLVELITGEKPLSRVRSEEGRGLATHFLEAMKENRVIDIIDIRIKDESKLEQVMAVAKLARKCLNRKGKNRPNMKEVSNELERIRSSPEDLDVRTENEDEEEDQPMAINNKR</sequence>
<name>WAKLA_ARATH</name>
<dbReference type="EC" id="2.7.11.-"/>
<dbReference type="EMBL" id="AC010924">
    <property type="protein sequence ID" value="AAF18507.1"/>
    <property type="molecule type" value="Genomic_DNA"/>
</dbReference>
<dbReference type="EMBL" id="CP002684">
    <property type="protein sequence ID" value="AEE29411.1"/>
    <property type="molecule type" value="Genomic_DNA"/>
</dbReference>
<dbReference type="PIR" id="H86295">
    <property type="entry name" value="H86295"/>
</dbReference>
<dbReference type="RefSeq" id="NP_173063.1">
    <property type="nucleotide sequence ID" value="NM_101479.2"/>
</dbReference>
<dbReference type="SMR" id="Q9S9M5"/>
<dbReference type="FunCoup" id="Q9S9M5">
    <property type="interactions" value="1"/>
</dbReference>
<dbReference type="STRING" id="3702.Q9S9M5"/>
<dbReference type="GlyCosmos" id="Q9S9M5">
    <property type="glycosylation" value="11 sites, No reported glycans"/>
</dbReference>
<dbReference type="GlyGen" id="Q9S9M5">
    <property type="glycosylation" value="12 sites"/>
</dbReference>
<dbReference type="iPTMnet" id="Q9S9M5"/>
<dbReference type="PaxDb" id="3702-AT1G16120.1"/>
<dbReference type="ProteomicsDB" id="242685"/>
<dbReference type="EnsemblPlants" id="AT1G16120.1">
    <property type="protein sequence ID" value="AT1G16120.1"/>
    <property type="gene ID" value="AT1G16120"/>
</dbReference>
<dbReference type="GeneID" id="838181"/>
<dbReference type="Gramene" id="AT1G16120.1">
    <property type="protein sequence ID" value="AT1G16120.1"/>
    <property type="gene ID" value="AT1G16120"/>
</dbReference>
<dbReference type="KEGG" id="ath:AT1G16120"/>
<dbReference type="Araport" id="AT1G16120"/>
<dbReference type="TAIR" id="AT1G16120">
    <property type="gene designation" value="WAKL1"/>
</dbReference>
<dbReference type="eggNOG" id="ENOG502RMXX">
    <property type="taxonomic scope" value="Eukaryota"/>
</dbReference>
<dbReference type="HOGENOM" id="CLU_000288_43_5_1"/>
<dbReference type="InParanoid" id="Q9S9M5"/>
<dbReference type="OMA" id="THNFKIN"/>
<dbReference type="PhylomeDB" id="Q9S9M5"/>
<dbReference type="PRO" id="PR:Q9S9M5"/>
<dbReference type="Proteomes" id="UP000006548">
    <property type="component" value="Chromosome 1"/>
</dbReference>
<dbReference type="ExpressionAtlas" id="Q9S9M5">
    <property type="expression patterns" value="baseline and differential"/>
</dbReference>
<dbReference type="GO" id="GO:0016020">
    <property type="term" value="C:membrane"/>
    <property type="evidence" value="ECO:0007669"/>
    <property type="project" value="UniProtKB-SubCell"/>
</dbReference>
<dbReference type="GO" id="GO:0009505">
    <property type="term" value="C:plant-type cell wall"/>
    <property type="evidence" value="ECO:0000250"/>
    <property type="project" value="TAIR"/>
</dbReference>
<dbReference type="GO" id="GO:0005524">
    <property type="term" value="F:ATP binding"/>
    <property type="evidence" value="ECO:0007669"/>
    <property type="project" value="UniProtKB-KW"/>
</dbReference>
<dbReference type="GO" id="GO:0030247">
    <property type="term" value="F:polysaccharide binding"/>
    <property type="evidence" value="ECO:0007669"/>
    <property type="project" value="InterPro"/>
</dbReference>
<dbReference type="GO" id="GO:0106310">
    <property type="term" value="F:protein serine kinase activity"/>
    <property type="evidence" value="ECO:0007669"/>
    <property type="project" value="RHEA"/>
</dbReference>
<dbReference type="GO" id="GO:0004674">
    <property type="term" value="F:protein serine/threonine kinase activity"/>
    <property type="evidence" value="ECO:0007669"/>
    <property type="project" value="UniProtKB-KW"/>
</dbReference>
<dbReference type="GO" id="GO:0007166">
    <property type="term" value="P:cell surface receptor signaling pathway"/>
    <property type="evidence" value="ECO:0007669"/>
    <property type="project" value="InterPro"/>
</dbReference>
<dbReference type="FunFam" id="1.10.510.10:FF:000084">
    <property type="entry name" value="Wall-associated receptor kinase 2"/>
    <property type="match status" value="1"/>
</dbReference>
<dbReference type="FunFam" id="3.30.200.20:FF:000043">
    <property type="entry name" value="Wall-associated receptor kinase 2"/>
    <property type="match status" value="1"/>
</dbReference>
<dbReference type="Gene3D" id="3.30.200.20">
    <property type="entry name" value="Phosphorylase Kinase, domain 1"/>
    <property type="match status" value="1"/>
</dbReference>
<dbReference type="Gene3D" id="1.10.510.10">
    <property type="entry name" value="Transferase(Phosphotransferase) domain 1"/>
    <property type="match status" value="1"/>
</dbReference>
<dbReference type="InterPro" id="IPR011009">
    <property type="entry name" value="Kinase-like_dom_sf"/>
</dbReference>
<dbReference type="InterPro" id="IPR000719">
    <property type="entry name" value="Prot_kinase_dom"/>
</dbReference>
<dbReference type="InterPro" id="IPR008271">
    <property type="entry name" value="Ser/Thr_kinase_AS"/>
</dbReference>
<dbReference type="InterPro" id="IPR013695">
    <property type="entry name" value="WAK"/>
</dbReference>
<dbReference type="InterPro" id="IPR045274">
    <property type="entry name" value="WAK-like"/>
</dbReference>
<dbReference type="InterPro" id="IPR025287">
    <property type="entry name" value="WAK_GUB"/>
</dbReference>
<dbReference type="PANTHER" id="PTHR27005:SF471">
    <property type="entry name" value="WALL-ASSOCIATED RECEPTOR KINASE-LIKE 1-RELATED"/>
    <property type="match status" value="1"/>
</dbReference>
<dbReference type="PANTHER" id="PTHR27005">
    <property type="entry name" value="WALL-ASSOCIATED RECEPTOR KINASE-LIKE 21"/>
    <property type="match status" value="1"/>
</dbReference>
<dbReference type="Pfam" id="PF13947">
    <property type="entry name" value="GUB_WAK_bind"/>
    <property type="match status" value="1"/>
</dbReference>
<dbReference type="Pfam" id="PF00069">
    <property type="entry name" value="Pkinase"/>
    <property type="match status" value="1"/>
</dbReference>
<dbReference type="Pfam" id="PF08488">
    <property type="entry name" value="WAK"/>
    <property type="match status" value="1"/>
</dbReference>
<dbReference type="SMART" id="SM00220">
    <property type="entry name" value="S_TKc"/>
    <property type="match status" value="1"/>
</dbReference>
<dbReference type="SUPFAM" id="SSF56112">
    <property type="entry name" value="Protein kinase-like (PK-like)"/>
    <property type="match status" value="1"/>
</dbReference>
<dbReference type="PROSITE" id="PS50011">
    <property type="entry name" value="PROTEIN_KINASE_DOM"/>
    <property type="match status" value="1"/>
</dbReference>
<dbReference type="PROSITE" id="PS00108">
    <property type="entry name" value="PROTEIN_KINASE_ST"/>
    <property type="match status" value="1"/>
</dbReference>
<accession>Q9S9M5</accession>
<keyword id="KW-0067">ATP-binding</keyword>
<keyword id="KW-1015">Disulfide bond</keyword>
<keyword id="KW-0325">Glycoprotein</keyword>
<keyword id="KW-0418">Kinase</keyword>
<keyword id="KW-0472">Membrane</keyword>
<keyword id="KW-0547">Nucleotide-binding</keyword>
<keyword id="KW-0597">Phosphoprotein</keyword>
<keyword id="KW-1185">Reference proteome</keyword>
<keyword id="KW-0723">Serine/threonine-protein kinase</keyword>
<keyword id="KW-0732">Signal</keyword>
<keyword id="KW-0808">Transferase</keyword>
<keyword id="KW-0812">Transmembrane</keyword>
<keyword id="KW-1133">Transmembrane helix</keyword>
<protein>
    <recommendedName>
        <fullName>Wall-associated receptor kinase-like 1</fullName>
        <ecNumber>2.7.11.-</ecNumber>
    </recommendedName>
</protein>
<gene>
    <name type="primary">WAKL1</name>
    <name type="ordered locus">At1g16120</name>
    <name type="ORF">T24D18.20</name>
</gene>
<evidence type="ECO:0000250" key="1"/>
<evidence type="ECO:0000250" key="2">
    <source>
        <dbReference type="UniProtKB" id="O48814"/>
    </source>
</evidence>
<evidence type="ECO:0000255" key="3"/>
<evidence type="ECO:0000255" key="4">
    <source>
        <dbReference type="PROSITE-ProRule" id="PRU00159"/>
    </source>
</evidence>
<evidence type="ECO:0000255" key="5">
    <source>
        <dbReference type="PROSITE-ProRule" id="PRU10027"/>
    </source>
</evidence>
<evidence type="ECO:0000256" key="6">
    <source>
        <dbReference type="SAM" id="MobiDB-lite"/>
    </source>
</evidence>
<evidence type="ECO:0000269" key="7">
    <source>
    </source>
</evidence>
<evidence type="ECO:0000305" key="8"/>
<feature type="signal peptide" evidence="3">
    <location>
        <begin position="1"/>
        <end position="25"/>
    </location>
</feature>
<feature type="chain" id="PRO_0000253305" description="Wall-associated receptor kinase-like 1">
    <location>
        <begin position="26"/>
        <end position="730"/>
    </location>
</feature>
<feature type="topological domain" description="Extracellular" evidence="3">
    <location>
        <begin position="26"/>
        <end position="358"/>
    </location>
</feature>
<feature type="transmembrane region" description="Helical" evidence="3">
    <location>
        <begin position="359"/>
        <end position="379"/>
    </location>
</feature>
<feature type="topological domain" description="Cytoplasmic" evidence="3">
    <location>
        <begin position="380"/>
        <end position="730"/>
    </location>
</feature>
<feature type="domain" description="Protein kinase" evidence="4">
    <location>
        <begin position="429"/>
        <end position="702"/>
    </location>
</feature>
<feature type="region of interest" description="Atypical EGF-like">
    <location>
        <begin position="282"/>
        <end position="341"/>
    </location>
</feature>
<feature type="region of interest" description="Disordered" evidence="6">
    <location>
        <begin position="685"/>
        <end position="730"/>
    </location>
</feature>
<feature type="compositionally biased region" description="Basic and acidic residues" evidence="6">
    <location>
        <begin position="691"/>
        <end position="714"/>
    </location>
</feature>
<feature type="active site" description="Proton acceptor" evidence="4 5">
    <location>
        <position position="554"/>
    </location>
</feature>
<feature type="binding site" evidence="4">
    <location>
        <begin position="435"/>
        <end position="443"/>
    </location>
    <ligand>
        <name>ATP</name>
        <dbReference type="ChEBI" id="CHEBI:30616"/>
    </ligand>
</feature>
<feature type="binding site" evidence="4">
    <location>
        <position position="457"/>
    </location>
    <ligand>
        <name>ATP</name>
        <dbReference type="ChEBI" id="CHEBI:30616"/>
    </ligand>
</feature>
<feature type="modified residue" description="Phosphotyrosine" evidence="2">
    <location>
        <position position="502"/>
    </location>
</feature>
<feature type="modified residue" description="Phosphothreonine" evidence="2">
    <location>
        <position position="588"/>
    </location>
</feature>
<feature type="modified residue" description="Phosphothreonine" evidence="2">
    <location>
        <position position="593"/>
    </location>
</feature>
<feature type="modified residue" description="Phosphotyrosine" evidence="2">
    <location>
        <position position="601"/>
    </location>
</feature>
<feature type="glycosylation site" description="N-linked (GlcNAc...) asparagine" evidence="3">
    <location>
        <position position="34"/>
    </location>
</feature>
<feature type="glycosylation site" description="N-linked (GlcNAc...) asparagine" evidence="3">
    <location>
        <position position="40"/>
    </location>
</feature>
<feature type="glycosylation site" description="N-linked (GlcNAc...) asparagine" evidence="3">
    <location>
        <position position="70"/>
    </location>
</feature>
<feature type="glycosylation site" description="N-linked (GlcNAc...) asparagine" evidence="3">
    <location>
        <position position="77"/>
    </location>
</feature>
<feature type="glycosylation site" description="N-linked (GlcNAc...) asparagine" evidence="3">
    <location>
        <position position="92"/>
    </location>
</feature>
<feature type="glycosylation site" description="N-linked (GlcNAc...) asparagine" evidence="3">
    <location>
        <position position="119"/>
    </location>
</feature>
<feature type="glycosylation site" description="N-linked (GlcNAc...) asparagine" evidence="3">
    <location>
        <position position="132"/>
    </location>
</feature>
<feature type="glycosylation site" description="N-linked (GlcNAc...) asparagine" evidence="3">
    <location>
        <position position="211"/>
    </location>
</feature>
<feature type="glycosylation site" description="N-linked (GlcNAc...) asparagine" evidence="3">
    <location>
        <position position="233"/>
    </location>
</feature>
<feature type="glycosylation site" description="N-linked (GlcNAc...) asparagine" evidence="3">
    <location>
        <position position="269"/>
    </location>
</feature>
<feature type="glycosylation site" description="N-linked (GlcNAc...) asparagine" evidence="3">
    <location>
        <position position="281"/>
    </location>
</feature>
<feature type="disulfide bond" evidence="1">
    <location>
        <begin position="284"/>
        <end position="297"/>
    </location>
</feature>
<feature type="disulfide bond" evidence="1">
    <location>
        <begin position="319"/>
        <end position="331"/>
    </location>
</feature>
<feature type="disulfide bond" evidence="1">
    <location>
        <begin position="325"/>
        <end position="341"/>
    </location>
</feature>
<organism>
    <name type="scientific">Arabidopsis thaliana</name>
    <name type="common">Mouse-ear cress</name>
    <dbReference type="NCBI Taxonomy" id="3702"/>
    <lineage>
        <taxon>Eukaryota</taxon>
        <taxon>Viridiplantae</taxon>
        <taxon>Streptophyta</taxon>
        <taxon>Embryophyta</taxon>
        <taxon>Tracheophyta</taxon>
        <taxon>Spermatophyta</taxon>
        <taxon>Magnoliopsida</taxon>
        <taxon>eudicotyledons</taxon>
        <taxon>Gunneridae</taxon>
        <taxon>Pentapetalae</taxon>
        <taxon>rosids</taxon>
        <taxon>malvids</taxon>
        <taxon>Brassicales</taxon>
        <taxon>Brassicaceae</taxon>
        <taxon>Camelineae</taxon>
        <taxon>Arabidopsis</taxon>
    </lineage>
</organism>
<proteinExistence type="evidence at transcript level"/>
<reference key="1">
    <citation type="journal article" date="2000" name="Nature">
        <title>Sequence and analysis of chromosome 1 of the plant Arabidopsis thaliana.</title>
        <authorList>
            <person name="Theologis A."/>
            <person name="Ecker J.R."/>
            <person name="Palm C.J."/>
            <person name="Federspiel N.A."/>
            <person name="Kaul S."/>
            <person name="White O."/>
            <person name="Alonso J."/>
            <person name="Altafi H."/>
            <person name="Araujo R."/>
            <person name="Bowman C.L."/>
            <person name="Brooks S.Y."/>
            <person name="Buehler E."/>
            <person name="Chan A."/>
            <person name="Chao Q."/>
            <person name="Chen H."/>
            <person name="Cheuk R.F."/>
            <person name="Chin C.W."/>
            <person name="Chung M.K."/>
            <person name="Conn L."/>
            <person name="Conway A.B."/>
            <person name="Conway A.R."/>
            <person name="Creasy T.H."/>
            <person name="Dewar K."/>
            <person name="Dunn P."/>
            <person name="Etgu P."/>
            <person name="Feldblyum T.V."/>
            <person name="Feng J.-D."/>
            <person name="Fong B."/>
            <person name="Fujii C.Y."/>
            <person name="Gill J.E."/>
            <person name="Goldsmith A.D."/>
            <person name="Haas B."/>
            <person name="Hansen N.F."/>
            <person name="Hughes B."/>
            <person name="Huizar L."/>
            <person name="Hunter J.L."/>
            <person name="Jenkins J."/>
            <person name="Johnson-Hopson C."/>
            <person name="Khan S."/>
            <person name="Khaykin E."/>
            <person name="Kim C.J."/>
            <person name="Koo H.L."/>
            <person name="Kremenetskaia I."/>
            <person name="Kurtz D.B."/>
            <person name="Kwan A."/>
            <person name="Lam B."/>
            <person name="Langin-Hooper S."/>
            <person name="Lee A."/>
            <person name="Lee J.M."/>
            <person name="Lenz C.A."/>
            <person name="Li J.H."/>
            <person name="Li Y.-P."/>
            <person name="Lin X."/>
            <person name="Liu S.X."/>
            <person name="Liu Z.A."/>
            <person name="Luros J.S."/>
            <person name="Maiti R."/>
            <person name="Marziali A."/>
            <person name="Militscher J."/>
            <person name="Miranda M."/>
            <person name="Nguyen M."/>
            <person name="Nierman W.C."/>
            <person name="Osborne B.I."/>
            <person name="Pai G."/>
            <person name="Peterson J."/>
            <person name="Pham P.K."/>
            <person name="Rizzo M."/>
            <person name="Rooney T."/>
            <person name="Rowley D."/>
            <person name="Sakano H."/>
            <person name="Salzberg S.L."/>
            <person name="Schwartz J.R."/>
            <person name="Shinn P."/>
            <person name="Southwick A.M."/>
            <person name="Sun H."/>
            <person name="Tallon L.J."/>
            <person name="Tambunga G."/>
            <person name="Toriumi M.J."/>
            <person name="Town C.D."/>
            <person name="Utterback T."/>
            <person name="Van Aken S."/>
            <person name="Vaysberg M."/>
            <person name="Vysotskaia V.S."/>
            <person name="Walker M."/>
            <person name="Wu D."/>
            <person name="Yu G."/>
            <person name="Fraser C.M."/>
            <person name="Venter J.C."/>
            <person name="Davis R.W."/>
        </authorList>
    </citation>
    <scope>NUCLEOTIDE SEQUENCE [LARGE SCALE GENOMIC DNA]</scope>
    <source>
        <strain>cv. Columbia</strain>
    </source>
</reference>
<reference key="2">
    <citation type="journal article" date="2017" name="Plant J.">
        <title>Araport11: a complete reannotation of the Arabidopsis thaliana reference genome.</title>
        <authorList>
            <person name="Cheng C.Y."/>
            <person name="Krishnakumar V."/>
            <person name="Chan A.P."/>
            <person name="Thibaud-Nissen F."/>
            <person name="Schobel S."/>
            <person name="Town C.D."/>
        </authorList>
    </citation>
    <scope>GENOME REANNOTATION</scope>
    <source>
        <strain>cv. Columbia</strain>
    </source>
</reference>
<reference key="3">
    <citation type="journal article" date="2002" name="Plant Physiol.">
        <title>The cell wall-associated kinase (WAK) and WAK-like kinase gene family.</title>
        <authorList>
            <person name="Verica J.A."/>
            <person name="He Z.-H."/>
        </authorList>
    </citation>
    <scope>GENE FAMILY ORGANIZATION</scope>
</reference>
<reference key="4">
    <citation type="journal article" date="2003" name="Plant Physiol.">
        <title>Tissue-specific and developmentally regulated expression of a cluster of tandemly arrayed cell wall-associated kinase-like kinase genes in Arabidopsis.</title>
        <authorList>
            <person name="Verica J.A."/>
            <person name="Chae L."/>
            <person name="Tong H.-Y."/>
            <person name="Ingmire P."/>
            <person name="He Z.-H."/>
        </authorList>
    </citation>
    <scope>TISSUE SPECIFICITY</scope>
    <scope>INDUCTION</scope>
</reference>